<comment type="function">
    <text evidence="1">Part of the ABC transporter complex LsrABCD involved in autoinducer 2 (AI-2) import. Binds AI-2 and delivers it to the LsrC and LsrD permeases (By similarity).</text>
</comment>
<comment type="subunit">
    <text evidence="1">The complex is composed of two ATP-binding proteins (LsrA), two transmembrane proteins (LsrC and LsrD) and a solute-binding protein (LsrB).</text>
</comment>
<comment type="subcellular location">
    <subcellularLocation>
        <location evidence="3">Periplasm</location>
    </subcellularLocation>
</comment>
<comment type="similarity">
    <text evidence="3">Belongs to the bacterial solute-binding protein 2 family.</text>
</comment>
<dbReference type="EMBL" id="CP001048">
    <property type="protein sequence ID" value="ACC87557.1"/>
    <property type="molecule type" value="Genomic_DNA"/>
</dbReference>
<dbReference type="RefSeq" id="WP_011191662.1">
    <property type="nucleotide sequence ID" value="NZ_CP009780.1"/>
</dbReference>
<dbReference type="SMR" id="B2K3F8"/>
<dbReference type="GeneID" id="49787448"/>
<dbReference type="KEGG" id="ypb:YPTS_0573"/>
<dbReference type="PATRIC" id="fig|502801.10.peg.4249"/>
<dbReference type="GO" id="GO:0043190">
    <property type="term" value="C:ATP-binding cassette (ABC) transporter complex"/>
    <property type="evidence" value="ECO:0007669"/>
    <property type="project" value="InterPro"/>
</dbReference>
<dbReference type="GO" id="GO:0030288">
    <property type="term" value="C:outer membrane-bounded periplasmic space"/>
    <property type="evidence" value="ECO:0007669"/>
    <property type="project" value="TreeGrafter"/>
</dbReference>
<dbReference type="GO" id="GO:0030246">
    <property type="term" value="F:carbohydrate binding"/>
    <property type="evidence" value="ECO:0007669"/>
    <property type="project" value="TreeGrafter"/>
</dbReference>
<dbReference type="CDD" id="cd20003">
    <property type="entry name" value="PBP1_LsrB_Quorum_Sensing"/>
    <property type="match status" value="1"/>
</dbReference>
<dbReference type="Gene3D" id="3.40.50.2300">
    <property type="match status" value="2"/>
</dbReference>
<dbReference type="InterPro" id="IPR050555">
    <property type="entry name" value="Bact_Solute-Bind_Prot2"/>
</dbReference>
<dbReference type="InterPro" id="IPR030159">
    <property type="entry name" value="LsrB"/>
</dbReference>
<dbReference type="InterPro" id="IPR028082">
    <property type="entry name" value="Peripla_BP_I"/>
</dbReference>
<dbReference type="InterPro" id="IPR025997">
    <property type="entry name" value="SBP_2_dom"/>
</dbReference>
<dbReference type="NCBIfam" id="NF011937">
    <property type="entry name" value="PRK15408.1"/>
    <property type="match status" value="1"/>
</dbReference>
<dbReference type="PANTHER" id="PTHR30036:SF7">
    <property type="entry name" value="ABC TRANSPORTER PERIPLASMIC-BINDING PROTEIN YPHF"/>
    <property type="match status" value="1"/>
</dbReference>
<dbReference type="PANTHER" id="PTHR30036">
    <property type="entry name" value="D-XYLOSE-BINDING PERIPLASMIC PROTEIN"/>
    <property type="match status" value="1"/>
</dbReference>
<dbReference type="Pfam" id="PF13407">
    <property type="entry name" value="Peripla_BP_4"/>
    <property type="match status" value="1"/>
</dbReference>
<dbReference type="SUPFAM" id="SSF53822">
    <property type="entry name" value="Periplasmic binding protein-like I"/>
    <property type="match status" value="1"/>
</dbReference>
<organism>
    <name type="scientific">Yersinia pseudotuberculosis serotype IB (strain PB1/+)</name>
    <dbReference type="NCBI Taxonomy" id="502801"/>
    <lineage>
        <taxon>Bacteria</taxon>
        <taxon>Pseudomonadati</taxon>
        <taxon>Pseudomonadota</taxon>
        <taxon>Gammaproteobacteria</taxon>
        <taxon>Enterobacterales</taxon>
        <taxon>Yersiniaceae</taxon>
        <taxon>Yersinia</taxon>
    </lineage>
</organism>
<proteinExistence type="inferred from homology"/>
<protein>
    <recommendedName>
        <fullName>Autoinducer 2-binding protein LsrB</fullName>
        <shortName>AI-2-binding protein LsrB</shortName>
    </recommendedName>
</protein>
<sequence>MRTQRLKKLALVCALGFACITTAQAAERIAFIPKLVGVGFFTSGGKGAVDAGKALGVDVTYDGPTEPSVSGQVQLINNFVNQGYNAIVVSAVSPDGLCPALKRAMQRGVKILTWDSDTKPECRSVYINQGTPNQLGSMLVDMAANQVKKEQAKVAFFYSSPTVTDQNQWVNEAKKKIQQEHPGWEIVTTQFGYNDATKSLQTAEGILKAYGDLDAIIAPDANALPAAAQAAENLKRANVAIVGFSTPNVMRPYVERGTVKEFGLWDVVNQGKISVYVANEMLKKGDLNVGDKIDIPNIGVVEVSPNRVQGYDYEAKGNGIVLLPQRVIFTKENISKYDF</sequence>
<gene>
    <name type="primary">lsrB</name>
    <name type="ordered locus">YPTS_0573</name>
</gene>
<feature type="signal peptide" evidence="2">
    <location>
        <begin position="1"/>
        <end position="25"/>
    </location>
</feature>
<feature type="chain" id="PRO_5000345564" description="Autoinducer 2-binding protein LsrB">
    <location>
        <begin position="26"/>
        <end position="339"/>
    </location>
</feature>
<keyword id="KW-0574">Periplasm</keyword>
<keyword id="KW-0732">Signal</keyword>
<name>LSRB_YERPB</name>
<reference key="1">
    <citation type="submission" date="2008-04" db="EMBL/GenBank/DDBJ databases">
        <title>Complete sequence of Yersinia pseudotuberculosis PB1/+.</title>
        <authorList>
            <person name="Copeland A."/>
            <person name="Lucas S."/>
            <person name="Lapidus A."/>
            <person name="Glavina del Rio T."/>
            <person name="Dalin E."/>
            <person name="Tice H."/>
            <person name="Bruce D."/>
            <person name="Goodwin L."/>
            <person name="Pitluck S."/>
            <person name="Munk A.C."/>
            <person name="Brettin T."/>
            <person name="Detter J.C."/>
            <person name="Han C."/>
            <person name="Tapia R."/>
            <person name="Schmutz J."/>
            <person name="Larimer F."/>
            <person name="Land M."/>
            <person name="Hauser L."/>
            <person name="Challacombe J.F."/>
            <person name="Green L."/>
            <person name="Lindler L.E."/>
            <person name="Nikolich M.P."/>
            <person name="Richardson P."/>
        </authorList>
    </citation>
    <scope>NUCLEOTIDE SEQUENCE [LARGE SCALE GENOMIC DNA]</scope>
    <source>
        <strain>PB1/+</strain>
    </source>
</reference>
<evidence type="ECO:0000250" key="1"/>
<evidence type="ECO:0000255" key="2"/>
<evidence type="ECO:0000305" key="3"/>
<accession>B2K3F8</accession>